<evidence type="ECO:0000255" key="1">
    <source>
        <dbReference type="HAMAP-Rule" id="MF_00009"/>
    </source>
</evidence>
<organism>
    <name type="scientific">Limosilactobacillus fermentum (strain NBRC 3956 / LMG 18251)</name>
    <name type="common">Lactobacillus fermentum</name>
    <dbReference type="NCBI Taxonomy" id="334390"/>
    <lineage>
        <taxon>Bacteria</taxon>
        <taxon>Bacillati</taxon>
        <taxon>Bacillota</taxon>
        <taxon>Bacilli</taxon>
        <taxon>Lactobacillales</taxon>
        <taxon>Lactobacillaceae</taxon>
        <taxon>Limosilactobacillus</taxon>
    </lineage>
</organism>
<feature type="chain" id="PRO_1000089187" description="Endoribonuclease YbeY">
    <location>
        <begin position="1"/>
        <end position="157"/>
    </location>
</feature>
<feature type="binding site" evidence="1">
    <location>
        <position position="123"/>
    </location>
    <ligand>
        <name>Zn(2+)</name>
        <dbReference type="ChEBI" id="CHEBI:29105"/>
        <note>catalytic</note>
    </ligand>
</feature>
<feature type="binding site" evidence="1">
    <location>
        <position position="127"/>
    </location>
    <ligand>
        <name>Zn(2+)</name>
        <dbReference type="ChEBI" id="CHEBI:29105"/>
        <note>catalytic</note>
    </ligand>
</feature>
<feature type="binding site" evidence="1">
    <location>
        <position position="133"/>
    </location>
    <ligand>
        <name>Zn(2+)</name>
        <dbReference type="ChEBI" id="CHEBI:29105"/>
        <note>catalytic</note>
    </ligand>
</feature>
<reference key="1">
    <citation type="journal article" date="2008" name="DNA Res.">
        <title>Comparative genome analysis of Lactobacillus reuteri and Lactobacillus fermentum reveal a genomic island for reuterin and cobalamin production.</title>
        <authorList>
            <person name="Morita H."/>
            <person name="Toh H."/>
            <person name="Fukuda S."/>
            <person name="Horikawa H."/>
            <person name="Oshima K."/>
            <person name="Suzuki T."/>
            <person name="Murakami M."/>
            <person name="Hisamatsu S."/>
            <person name="Kato Y."/>
            <person name="Takizawa T."/>
            <person name="Fukuoka H."/>
            <person name="Yoshimura T."/>
            <person name="Itoh K."/>
            <person name="O'Sullivan D.J."/>
            <person name="McKay L.L."/>
            <person name="Ohno H."/>
            <person name="Kikuchi J."/>
            <person name="Masaoka T."/>
            <person name="Hattori M."/>
        </authorList>
    </citation>
    <scope>NUCLEOTIDE SEQUENCE [LARGE SCALE GENOMIC DNA]</scope>
    <source>
        <strain>NBRC 3956 / LMG 18251</strain>
    </source>
</reference>
<name>YBEY_LIMF3</name>
<protein>
    <recommendedName>
        <fullName evidence="1">Endoribonuclease YbeY</fullName>
        <ecNumber evidence="1">3.1.-.-</ecNumber>
    </recommendedName>
</protein>
<gene>
    <name evidence="1" type="primary">ybeY</name>
    <name type="ordered locus">LAF_0838</name>
</gene>
<accession>B2GBZ2</accession>
<dbReference type="EC" id="3.1.-.-" evidence="1"/>
<dbReference type="EMBL" id="AP008937">
    <property type="protein sequence ID" value="BAG27174.1"/>
    <property type="molecule type" value="Genomic_DNA"/>
</dbReference>
<dbReference type="RefSeq" id="WP_012391175.1">
    <property type="nucleotide sequence ID" value="NC_010610.1"/>
</dbReference>
<dbReference type="SMR" id="B2GBZ2"/>
<dbReference type="KEGG" id="lfe:LAF_0838"/>
<dbReference type="eggNOG" id="COG0319">
    <property type="taxonomic scope" value="Bacteria"/>
</dbReference>
<dbReference type="HOGENOM" id="CLU_106710_3_0_9"/>
<dbReference type="Proteomes" id="UP000001697">
    <property type="component" value="Chromosome"/>
</dbReference>
<dbReference type="GO" id="GO:0005737">
    <property type="term" value="C:cytoplasm"/>
    <property type="evidence" value="ECO:0007669"/>
    <property type="project" value="UniProtKB-SubCell"/>
</dbReference>
<dbReference type="GO" id="GO:0004222">
    <property type="term" value="F:metalloendopeptidase activity"/>
    <property type="evidence" value="ECO:0007669"/>
    <property type="project" value="InterPro"/>
</dbReference>
<dbReference type="GO" id="GO:0004521">
    <property type="term" value="F:RNA endonuclease activity"/>
    <property type="evidence" value="ECO:0007669"/>
    <property type="project" value="UniProtKB-UniRule"/>
</dbReference>
<dbReference type="GO" id="GO:0008270">
    <property type="term" value="F:zinc ion binding"/>
    <property type="evidence" value="ECO:0007669"/>
    <property type="project" value="UniProtKB-UniRule"/>
</dbReference>
<dbReference type="GO" id="GO:0006364">
    <property type="term" value="P:rRNA processing"/>
    <property type="evidence" value="ECO:0007669"/>
    <property type="project" value="UniProtKB-UniRule"/>
</dbReference>
<dbReference type="Gene3D" id="3.40.390.30">
    <property type="entry name" value="Metalloproteases ('zincins'), catalytic domain"/>
    <property type="match status" value="1"/>
</dbReference>
<dbReference type="HAMAP" id="MF_00009">
    <property type="entry name" value="Endoribonucl_YbeY"/>
    <property type="match status" value="1"/>
</dbReference>
<dbReference type="InterPro" id="IPR023091">
    <property type="entry name" value="MetalPrtase_cat_dom_sf_prd"/>
</dbReference>
<dbReference type="InterPro" id="IPR002036">
    <property type="entry name" value="YbeY"/>
</dbReference>
<dbReference type="InterPro" id="IPR020549">
    <property type="entry name" value="YbeY_CS"/>
</dbReference>
<dbReference type="NCBIfam" id="TIGR00043">
    <property type="entry name" value="rRNA maturation RNase YbeY"/>
    <property type="match status" value="1"/>
</dbReference>
<dbReference type="PANTHER" id="PTHR46986">
    <property type="entry name" value="ENDORIBONUCLEASE YBEY, CHLOROPLASTIC"/>
    <property type="match status" value="1"/>
</dbReference>
<dbReference type="PANTHER" id="PTHR46986:SF1">
    <property type="entry name" value="ENDORIBONUCLEASE YBEY, CHLOROPLASTIC"/>
    <property type="match status" value="1"/>
</dbReference>
<dbReference type="Pfam" id="PF02130">
    <property type="entry name" value="YbeY"/>
    <property type="match status" value="1"/>
</dbReference>
<dbReference type="SUPFAM" id="SSF55486">
    <property type="entry name" value="Metalloproteases ('zincins'), catalytic domain"/>
    <property type="match status" value="1"/>
</dbReference>
<dbReference type="PROSITE" id="PS01306">
    <property type="entry name" value="UPF0054"/>
    <property type="match status" value="1"/>
</dbReference>
<keyword id="KW-0963">Cytoplasm</keyword>
<keyword id="KW-0255">Endonuclease</keyword>
<keyword id="KW-0378">Hydrolase</keyword>
<keyword id="KW-0479">Metal-binding</keyword>
<keyword id="KW-0540">Nuclease</keyword>
<keyword id="KW-1185">Reference proteome</keyword>
<keyword id="KW-0690">Ribosome biogenesis</keyword>
<keyword id="KW-0698">rRNA processing</keyword>
<keyword id="KW-0862">Zinc</keyword>
<proteinExistence type="inferred from homology"/>
<sequence length="157" mass="17793">MELQLRDHTEGKLQPSQERLAEKALAQAAERLDVPEQAEMSLTFVLNPEIRELNRDYRGIDRATDVISFAIEDDDDLANLPAEIRAELPVELGDLVISIDKVTEQALFLNHSADRELGYLLVHGFLHLNGYDHEEPADEEKMFTLQEEILDGLGLSR</sequence>
<comment type="function">
    <text evidence="1">Single strand-specific metallo-endoribonuclease involved in late-stage 70S ribosome quality control and in maturation of the 3' terminus of the 16S rRNA.</text>
</comment>
<comment type="cofactor">
    <cofactor evidence="1">
        <name>Zn(2+)</name>
        <dbReference type="ChEBI" id="CHEBI:29105"/>
    </cofactor>
    <text evidence="1">Binds 1 zinc ion.</text>
</comment>
<comment type="subcellular location">
    <subcellularLocation>
        <location evidence="1">Cytoplasm</location>
    </subcellularLocation>
</comment>
<comment type="similarity">
    <text evidence="1">Belongs to the endoribonuclease YbeY family.</text>
</comment>